<reference key="1">
    <citation type="journal article" date="2006" name="Proc. Natl. Acad. Sci. U.S.A.">
        <title>Evolution of sensory complexity recorded in a myxobacterial genome.</title>
        <authorList>
            <person name="Goldman B.S."/>
            <person name="Nierman W.C."/>
            <person name="Kaiser D."/>
            <person name="Slater S.C."/>
            <person name="Durkin A.S."/>
            <person name="Eisen J.A."/>
            <person name="Ronning C.M."/>
            <person name="Barbazuk W.B."/>
            <person name="Blanchard M."/>
            <person name="Field C."/>
            <person name="Halling C."/>
            <person name="Hinkle G."/>
            <person name="Iartchuk O."/>
            <person name="Kim H.S."/>
            <person name="Mackenzie C."/>
            <person name="Madupu R."/>
            <person name="Miller N."/>
            <person name="Shvartsbeyn A."/>
            <person name="Sullivan S.A."/>
            <person name="Vaudin M."/>
            <person name="Wiegand R."/>
            <person name="Kaplan H.B."/>
        </authorList>
    </citation>
    <scope>NUCLEOTIDE SEQUENCE [LARGE SCALE GENOMIC DNA]</scope>
    <source>
        <strain>DK1622</strain>
    </source>
</reference>
<proteinExistence type="inferred from homology"/>
<comment type="function">
    <text evidence="1">Part of the ABC transporter complex HmuTUV involved in hemin import. Responsible for energy coupling to the transport system.</text>
</comment>
<comment type="subunit">
    <text evidence="1">The complex is composed of two ATP-binding proteins (HmuV), two transmembrane proteins (HmuU) and a solute-binding protein (HmuT).</text>
</comment>
<comment type="subcellular location">
    <subcellularLocation>
        <location evidence="1">Cell inner membrane</location>
        <topology evidence="1">Peripheral membrane protein</topology>
    </subcellularLocation>
</comment>
<comment type="similarity">
    <text evidence="1">Belongs to the ABC transporter superfamily. Heme (hemin) importer (TC 3.A.1.14.5) family.</text>
</comment>
<feature type="chain" id="PRO_0000269602" description="Hemin import ATP-binding protein HmuV">
    <location>
        <begin position="1"/>
        <end position="267"/>
    </location>
</feature>
<feature type="domain" description="ABC transporter" evidence="1">
    <location>
        <begin position="3"/>
        <end position="243"/>
    </location>
</feature>
<feature type="binding site" evidence="1">
    <location>
        <begin position="35"/>
        <end position="42"/>
    </location>
    <ligand>
        <name>ATP</name>
        <dbReference type="ChEBI" id="CHEBI:30616"/>
    </ligand>
</feature>
<accession>Q1DCP5</accession>
<name>HMUV_MYXXD</name>
<gene>
    <name evidence="1" type="primary">hmuV</name>
    <name type="ordered locus">MXAN_1321</name>
</gene>
<keyword id="KW-0067">ATP-binding</keyword>
<keyword id="KW-0997">Cell inner membrane</keyword>
<keyword id="KW-1003">Cell membrane</keyword>
<keyword id="KW-0472">Membrane</keyword>
<keyword id="KW-0547">Nucleotide-binding</keyword>
<keyword id="KW-1185">Reference proteome</keyword>
<keyword id="KW-1278">Translocase</keyword>
<keyword id="KW-0813">Transport</keyword>
<organism>
    <name type="scientific">Myxococcus xanthus (strain DK1622)</name>
    <dbReference type="NCBI Taxonomy" id="246197"/>
    <lineage>
        <taxon>Bacteria</taxon>
        <taxon>Pseudomonadati</taxon>
        <taxon>Myxococcota</taxon>
        <taxon>Myxococcia</taxon>
        <taxon>Myxococcales</taxon>
        <taxon>Cystobacterineae</taxon>
        <taxon>Myxococcaceae</taxon>
        <taxon>Myxococcus</taxon>
    </lineage>
</organism>
<evidence type="ECO:0000255" key="1">
    <source>
        <dbReference type="HAMAP-Rule" id="MF_01718"/>
    </source>
</evidence>
<sequence length="267" mass="28239">MSLEVRGIEVWRGRGRTLGPMDLTLEPGEVLAVVGPNGAGKSTLLSAMSGELRCSTGEVLLDGTPLLQWKPRERAMRLGVLPQESSLGFGFTALEVALLGRSPHSSRAEGSADLAAAVAALDATDTRHLASRSYLTLSGGERQRVQLSRVLAQLSEPLASGHRYLLLDEPTASLDLAHQHLVLEAAARFAQAGGAVLAVLHDLNLAARYAHRMAVLAEGRVVELGAPAQVLSQELVARVFGLRVQVVEWPGSPGPLVIPEGRAPLTP</sequence>
<protein>
    <recommendedName>
        <fullName evidence="1">Hemin import ATP-binding protein HmuV</fullName>
        <ecNumber evidence="1">7.6.2.-</ecNumber>
    </recommendedName>
</protein>
<dbReference type="EC" id="7.6.2.-" evidence="1"/>
<dbReference type="EMBL" id="CP000113">
    <property type="protein sequence ID" value="ABF88932.1"/>
    <property type="molecule type" value="Genomic_DNA"/>
</dbReference>
<dbReference type="RefSeq" id="WP_011551438.1">
    <property type="nucleotide sequence ID" value="NC_008095.1"/>
</dbReference>
<dbReference type="SMR" id="Q1DCP5"/>
<dbReference type="STRING" id="246197.MXAN_1321"/>
<dbReference type="EnsemblBacteria" id="ABF88932">
    <property type="protein sequence ID" value="ABF88932"/>
    <property type="gene ID" value="MXAN_1321"/>
</dbReference>
<dbReference type="GeneID" id="41358767"/>
<dbReference type="KEGG" id="mxa:MXAN_1321"/>
<dbReference type="eggNOG" id="COG4559">
    <property type="taxonomic scope" value="Bacteria"/>
</dbReference>
<dbReference type="HOGENOM" id="CLU_000604_1_11_7"/>
<dbReference type="OrthoDB" id="9809450at2"/>
<dbReference type="Proteomes" id="UP000002402">
    <property type="component" value="Chromosome"/>
</dbReference>
<dbReference type="GO" id="GO:0005886">
    <property type="term" value="C:plasma membrane"/>
    <property type="evidence" value="ECO:0007669"/>
    <property type="project" value="UniProtKB-SubCell"/>
</dbReference>
<dbReference type="GO" id="GO:0005524">
    <property type="term" value="F:ATP binding"/>
    <property type="evidence" value="ECO:0007669"/>
    <property type="project" value="UniProtKB-KW"/>
</dbReference>
<dbReference type="GO" id="GO:0016887">
    <property type="term" value="F:ATP hydrolysis activity"/>
    <property type="evidence" value="ECO:0007669"/>
    <property type="project" value="InterPro"/>
</dbReference>
<dbReference type="CDD" id="cd03214">
    <property type="entry name" value="ABC_Iron-Siderophores_B12_Hemin"/>
    <property type="match status" value="1"/>
</dbReference>
<dbReference type="Gene3D" id="3.40.50.300">
    <property type="entry name" value="P-loop containing nucleotide triphosphate hydrolases"/>
    <property type="match status" value="1"/>
</dbReference>
<dbReference type="InterPro" id="IPR003593">
    <property type="entry name" value="AAA+_ATPase"/>
</dbReference>
<dbReference type="InterPro" id="IPR003439">
    <property type="entry name" value="ABC_transporter-like_ATP-bd"/>
</dbReference>
<dbReference type="InterPro" id="IPR017871">
    <property type="entry name" value="ABC_transporter-like_CS"/>
</dbReference>
<dbReference type="InterPro" id="IPR027417">
    <property type="entry name" value="P-loop_NTPase"/>
</dbReference>
<dbReference type="NCBIfam" id="NF010068">
    <property type="entry name" value="PRK13548.1"/>
    <property type="match status" value="1"/>
</dbReference>
<dbReference type="PANTHER" id="PTHR42794">
    <property type="entry name" value="HEMIN IMPORT ATP-BINDING PROTEIN HMUV"/>
    <property type="match status" value="1"/>
</dbReference>
<dbReference type="PANTHER" id="PTHR42794:SF1">
    <property type="entry name" value="HEMIN IMPORT ATP-BINDING PROTEIN HMUV"/>
    <property type="match status" value="1"/>
</dbReference>
<dbReference type="Pfam" id="PF00005">
    <property type="entry name" value="ABC_tran"/>
    <property type="match status" value="1"/>
</dbReference>
<dbReference type="SMART" id="SM00382">
    <property type="entry name" value="AAA"/>
    <property type="match status" value="1"/>
</dbReference>
<dbReference type="SUPFAM" id="SSF52540">
    <property type="entry name" value="P-loop containing nucleoside triphosphate hydrolases"/>
    <property type="match status" value="1"/>
</dbReference>
<dbReference type="PROSITE" id="PS00211">
    <property type="entry name" value="ABC_TRANSPORTER_1"/>
    <property type="match status" value="1"/>
</dbReference>
<dbReference type="PROSITE" id="PS50893">
    <property type="entry name" value="ABC_TRANSPORTER_2"/>
    <property type="match status" value="1"/>
</dbReference>
<dbReference type="PROSITE" id="PS51261">
    <property type="entry name" value="HMUV"/>
    <property type="match status" value="1"/>
</dbReference>